<feature type="chain" id="PRO_0000190901" description="Gamma-secretase subunit PEN-2">
    <location>
        <begin position="1"/>
        <end position="101"/>
    </location>
</feature>
<feature type="topological domain" description="Cytoplasmic" evidence="1">
    <location>
        <begin position="1"/>
        <end position="17"/>
    </location>
</feature>
<feature type="intramembrane region" description="Helical" evidence="1">
    <location>
        <begin position="18"/>
        <end position="36"/>
    </location>
</feature>
<feature type="topological domain" description="Cytoplasmic" evidence="1">
    <location>
        <begin position="37"/>
        <end position="57"/>
    </location>
</feature>
<feature type="transmembrane region" description="Helical" evidence="1">
    <location>
        <begin position="58"/>
        <end position="78"/>
    </location>
</feature>
<feature type="topological domain" description="Lumenal" evidence="1">
    <location>
        <begin position="79"/>
        <end position="101"/>
    </location>
</feature>
<proteinExistence type="evidence at protein level"/>
<accession>Q9CQR7</accession>
<gene>
    <name type="primary">Psenen</name>
    <name type="synonym">Pen2</name>
</gene>
<comment type="function">
    <text evidence="2 3 4">Essential subunit of the gamma-secretase complex, an endoprotease complex that catalyzes the intramembrane cleavage of integral membrane proteins such as Notch receptors and APP (amyloid-beta precursor protein) (PubMed:12522139, PubMed:24941111). The gamma-secretase complex plays a role in Notch and Wnt signaling cascades and regulation of downstream processes via its role in processing key regulatory proteins, and by regulating cytosolic CTNNB1 levels (Probable). PSENEN modulates both endoproteolysis of presenilin and gamma-secretase activity (PubMed:12522139, PubMed:24941111).</text>
</comment>
<comment type="subunit">
    <text evidence="2 3">The functional gamma-secretase complex is composed of at least four polypeptides: a presenilin homodimer (PSEN1 or PSEN2), nicastrin (NCSTN), APH1 (APH1A or APH1B) and PSENEN.</text>
</comment>
<comment type="subcellular location">
    <subcellularLocation>
        <location evidence="2">Endoplasmic reticulum membrane</location>
        <topology evidence="1">Multi-pass membrane protein</topology>
    </subcellularLocation>
    <subcellularLocation>
        <location evidence="2">Golgi apparatus</location>
        <location evidence="2">Golgi stack membrane</location>
        <topology evidence="1">Multi-pass membrane protein</topology>
    </subcellularLocation>
    <subcellularLocation>
        <location evidence="1">Cell membrane</location>
        <topology evidence="1">Multi-pass membrane protein</topology>
    </subcellularLocation>
    <subcellularLocation>
        <location evidence="1">Membrane</location>
        <topology evidence="1">Multi-pass membrane protein</topology>
    </subcellularLocation>
    <text evidence="2">Predominantly located in the endoplasmic reticulum and in the cis-Golgi.</text>
</comment>
<comment type="similarity">
    <text evidence="4">Belongs to the PEN-2 family.</text>
</comment>
<comment type="caution">
    <text evidence="4">3D-structure analysis of the human homolog indicates that the membrane topology differs from the predictions. Contrary to predictions, the N-terminus contains two short helices that dip into the membrane, but do not cross it. The C-terminus contains the single transmembrane helix. This gives rise to a topology where the N-terminus is cytoplasmic and the C-terminus is lumenal.</text>
</comment>
<organism>
    <name type="scientific">Mus musculus</name>
    <name type="common">Mouse</name>
    <dbReference type="NCBI Taxonomy" id="10090"/>
    <lineage>
        <taxon>Eukaryota</taxon>
        <taxon>Metazoa</taxon>
        <taxon>Chordata</taxon>
        <taxon>Craniata</taxon>
        <taxon>Vertebrata</taxon>
        <taxon>Euteleostomi</taxon>
        <taxon>Mammalia</taxon>
        <taxon>Eutheria</taxon>
        <taxon>Euarchontoglires</taxon>
        <taxon>Glires</taxon>
        <taxon>Rodentia</taxon>
        <taxon>Myomorpha</taxon>
        <taxon>Muroidea</taxon>
        <taxon>Muridae</taxon>
        <taxon>Murinae</taxon>
        <taxon>Mus</taxon>
        <taxon>Mus</taxon>
    </lineage>
</organism>
<name>PEN2_MOUSE</name>
<evidence type="ECO:0000250" key="1">
    <source>
        <dbReference type="UniProtKB" id="Q9NZ42"/>
    </source>
</evidence>
<evidence type="ECO:0000269" key="2">
    <source>
    </source>
</evidence>
<evidence type="ECO:0000269" key="3">
    <source>
    </source>
</evidence>
<evidence type="ECO:0000305" key="4"/>
<protein>
    <recommendedName>
        <fullName>Gamma-secretase subunit PEN-2</fullName>
    </recommendedName>
    <alternativeName>
        <fullName>Presenilin enhancer protein 2</fullName>
    </alternativeName>
</protein>
<dbReference type="EMBL" id="AK002440">
    <property type="protein sequence ID" value="BAB22102.1"/>
    <property type="molecule type" value="mRNA"/>
</dbReference>
<dbReference type="EMBL" id="AK006284">
    <property type="protein sequence ID" value="BAB24503.1"/>
    <property type="molecule type" value="mRNA"/>
</dbReference>
<dbReference type="EMBL" id="AK007621">
    <property type="protein sequence ID" value="BAB25141.1"/>
    <property type="molecule type" value="mRNA"/>
</dbReference>
<dbReference type="EMBL" id="BC024347">
    <property type="protein sequence ID" value="AAH24347.1"/>
    <property type="molecule type" value="mRNA"/>
</dbReference>
<dbReference type="EMBL" id="BC081443">
    <property type="protein sequence ID" value="AAH81443.1"/>
    <property type="molecule type" value="mRNA"/>
</dbReference>
<dbReference type="CCDS" id="CCDS21099.1"/>
<dbReference type="RefSeq" id="NP_001350945.1">
    <property type="nucleotide sequence ID" value="NM_001364016.1"/>
</dbReference>
<dbReference type="RefSeq" id="NP_001350946.1">
    <property type="nucleotide sequence ID" value="NM_001364017.1"/>
</dbReference>
<dbReference type="RefSeq" id="NP_079774.1">
    <property type="nucleotide sequence ID" value="NM_025498.3"/>
</dbReference>
<dbReference type="SMR" id="Q9CQR7"/>
<dbReference type="BioGRID" id="211397">
    <property type="interactions" value="2"/>
</dbReference>
<dbReference type="ComplexPortal" id="CPX-4234">
    <property type="entry name" value="Gamma-secretase complex, Aph1a-Psen1 variant"/>
</dbReference>
<dbReference type="ComplexPortal" id="CPX-4235">
    <property type="entry name" value="Gamma-secretase complex, Aph1b-Psen1 variant"/>
</dbReference>
<dbReference type="ComplexPortal" id="CPX-4236">
    <property type="entry name" value="Gamma-secretase complex, Aph1a-Psen2 variant"/>
</dbReference>
<dbReference type="ComplexPortal" id="CPX-4237">
    <property type="entry name" value="Gamma-secretase complex, Aph1b-Psen2 variant"/>
</dbReference>
<dbReference type="CORUM" id="Q9CQR7"/>
<dbReference type="DIP" id="DIP-36333N"/>
<dbReference type="FunCoup" id="Q9CQR7">
    <property type="interactions" value="1658"/>
</dbReference>
<dbReference type="IntAct" id="Q9CQR7">
    <property type="interactions" value="5"/>
</dbReference>
<dbReference type="STRING" id="10090.ENSMUSP00000044682"/>
<dbReference type="TCDB" id="4.G.1.1.1">
    <property type="family name" value="the Gama-secretase (Gama-secretase) family"/>
</dbReference>
<dbReference type="iPTMnet" id="Q9CQR7"/>
<dbReference type="PhosphoSitePlus" id="Q9CQR7"/>
<dbReference type="PaxDb" id="10090-ENSMUSP00000044682"/>
<dbReference type="PeptideAtlas" id="Q9CQR7"/>
<dbReference type="ProteomicsDB" id="287913"/>
<dbReference type="Pumba" id="Q9CQR7"/>
<dbReference type="TopDownProteomics" id="Q9CQR7"/>
<dbReference type="DNASU" id="66340"/>
<dbReference type="Ensembl" id="ENSMUST00000043898.8">
    <property type="protein sequence ID" value="ENSMUSP00000044682.7"/>
    <property type="gene ID" value="ENSMUSG00000036835.8"/>
</dbReference>
<dbReference type="Ensembl" id="ENSMUST00000207747.2">
    <property type="protein sequence ID" value="ENSMUSP00000146675.2"/>
    <property type="gene ID" value="ENSMUSG00000036835.8"/>
</dbReference>
<dbReference type="GeneID" id="66340"/>
<dbReference type="KEGG" id="mmu:66340"/>
<dbReference type="UCSC" id="uc009gez.1">
    <property type="organism name" value="mouse"/>
</dbReference>
<dbReference type="AGR" id="MGI:1913590"/>
<dbReference type="CTD" id="55851"/>
<dbReference type="MGI" id="MGI:1913590">
    <property type="gene designation" value="Psenen"/>
</dbReference>
<dbReference type="VEuPathDB" id="HostDB:ENSMUSG00000036835"/>
<dbReference type="eggNOG" id="KOG3402">
    <property type="taxonomic scope" value="Eukaryota"/>
</dbReference>
<dbReference type="GeneTree" id="ENSGT00390000016319"/>
<dbReference type="HOGENOM" id="CLU_124142_2_0_1"/>
<dbReference type="InParanoid" id="Q9CQR7"/>
<dbReference type="OMA" id="KLYLCKW"/>
<dbReference type="OrthoDB" id="524898at2759"/>
<dbReference type="PhylomeDB" id="Q9CQR7"/>
<dbReference type="TreeFam" id="TF313116"/>
<dbReference type="Reactome" id="R-MMU-1251985">
    <property type="pathway name" value="Nuclear signaling by ERBB4"/>
</dbReference>
<dbReference type="Reactome" id="R-MMU-193692">
    <property type="pathway name" value="Regulated proteolysis of p75NTR"/>
</dbReference>
<dbReference type="Reactome" id="R-MMU-205043">
    <property type="pathway name" value="NRIF signals cell death from the nucleus"/>
</dbReference>
<dbReference type="Reactome" id="R-MMU-3928665">
    <property type="pathway name" value="EPH-ephrin mediated repulsion of cells"/>
</dbReference>
<dbReference type="Reactome" id="R-MMU-9013507">
    <property type="pathway name" value="NOTCH3 Activation and Transmission of Signal to the Nucleus"/>
</dbReference>
<dbReference type="Reactome" id="R-MMU-9017802">
    <property type="pathway name" value="Noncanonical activation of NOTCH3"/>
</dbReference>
<dbReference type="Reactome" id="R-MMU-9839383">
    <property type="pathway name" value="TGFBR3 PTM regulation"/>
</dbReference>
<dbReference type="BioGRID-ORCS" id="66340">
    <property type="hits" value="11 hits in 77 CRISPR screens"/>
</dbReference>
<dbReference type="ChiTaRS" id="Psenen">
    <property type="organism name" value="mouse"/>
</dbReference>
<dbReference type="PRO" id="PR:Q9CQR7"/>
<dbReference type="Proteomes" id="UP000000589">
    <property type="component" value="Chromosome 7"/>
</dbReference>
<dbReference type="RNAct" id="Q9CQR7">
    <property type="molecule type" value="protein"/>
</dbReference>
<dbReference type="Bgee" id="ENSMUSG00000036835">
    <property type="expression patterns" value="Expressed in primary oocyte and 62 other cell types or tissues"/>
</dbReference>
<dbReference type="ExpressionAtlas" id="Q9CQR7">
    <property type="expression patterns" value="baseline and differential"/>
</dbReference>
<dbReference type="GO" id="GO:0005783">
    <property type="term" value="C:endoplasmic reticulum"/>
    <property type="evidence" value="ECO:0000250"/>
    <property type="project" value="HGNC-UCL"/>
</dbReference>
<dbReference type="GO" id="GO:0005789">
    <property type="term" value="C:endoplasmic reticulum membrane"/>
    <property type="evidence" value="ECO:0000303"/>
    <property type="project" value="ComplexPortal"/>
</dbReference>
<dbReference type="GO" id="GO:0070765">
    <property type="term" value="C:gamma-secretase complex"/>
    <property type="evidence" value="ECO:0000314"/>
    <property type="project" value="MGI"/>
</dbReference>
<dbReference type="GO" id="GO:0005794">
    <property type="term" value="C:Golgi apparatus"/>
    <property type="evidence" value="ECO:0000250"/>
    <property type="project" value="HGNC-UCL"/>
</dbReference>
<dbReference type="GO" id="GO:0032580">
    <property type="term" value="C:Golgi cisterna membrane"/>
    <property type="evidence" value="ECO:0007669"/>
    <property type="project" value="UniProtKB-SubCell"/>
</dbReference>
<dbReference type="GO" id="GO:0000139">
    <property type="term" value="C:Golgi membrane"/>
    <property type="evidence" value="ECO:0000303"/>
    <property type="project" value="ComplexPortal"/>
</dbReference>
<dbReference type="GO" id="GO:0016020">
    <property type="term" value="C:membrane"/>
    <property type="evidence" value="ECO:0000250"/>
    <property type="project" value="UniProtKB"/>
</dbReference>
<dbReference type="GO" id="GO:0005886">
    <property type="term" value="C:plasma membrane"/>
    <property type="evidence" value="ECO:0000250"/>
    <property type="project" value="HGNC-UCL"/>
</dbReference>
<dbReference type="GO" id="GO:0042734">
    <property type="term" value="C:presynaptic membrane"/>
    <property type="evidence" value="ECO:0007669"/>
    <property type="project" value="Ensembl"/>
</dbReference>
<dbReference type="GO" id="GO:0061133">
    <property type="term" value="F:endopeptidase activator activity"/>
    <property type="evidence" value="ECO:0000315"/>
    <property type="project" value="ARUK-UCL"/>
</dbReference>
<dbReference type="GO" id="GO:0019899">
    <property type="term" value="F:enzyme binding"/>
    <property type="evidence" value="ECO:0007669"/>
    <property type="project" value="Ensembl"/>
</dbReference>
<dbReference type="GO" id="GO:0042987">
    <property type="term" value="P:amyloid precursor protein catabolic process"/>
    <property type="evidence" value="ECO:0000266"/>
    <property type="project" value="ComplexPortal"/>
</dbReference>
<dbReference type="GO" id="GO:0042982">
    <property type="term" value="P:amyloid precursor protein metabolic process"/>
    <property type="evidence" value="ECO:0000250"/>
    <property type="project" value="UniProtKB"/>
</dbReference>
<dbReference type="GO" id="GO:0034205">
    <property type="term" value="P:amyloid-beta formation"/>
    <property type="evidence" value="ECO:0000250"/>
    <property type="project" value="UniProtKB"/>
</dbReference>
<dbReference type="GO" id="GO:0006509">
    <property type="term" value="P:membrane protein ectodomain proteolysis"/>
    <property type="evidence" value="ECO:0000250"/>
    <property type="project" value="HGNC-UCL"/>
</dbReference>
<dbReference type="GO" id="GO:0031293">
    <property type="term" value="P:membrane protein intracellular domain proteolysis"/>
    <property type="evidence" value="ECO:0000266"/>
    <property type="project" value="ComplexPortal"/>
</dbReference>
<dbReference type="GO" id="GO:0007220">
    <property type="term" value="P:Notch receptor processing"/>
    <property type="evidence" value="ECO:0000315"/>
    <property type="project" value="MGI"/>
</dbReference>
<dbReference type="GO" id="GO:0007219">
    <property type="term" value="P:Notch signaling pathway"/>
    <property type="evidence" value="ECO:0007669"/>
    <property type="project" value="UniProtKB-KW"/>
</dbReference>
<dbReference type="GO" id="GO:0010950">
    <property type="term" value="P:positive regulation of endopeptidase activity"/>
    <property type="evidence" value="ECO:0000315"/>
    <property type="project" value="UniProtKB"/>
</dbReference>
<dbReference type="GO" id="GO:0016485">
    <property type="term" value="P:protein processing"/>
    <property type="evidence" value="ECO:0000315"/>
    <property type="project" value="UniProtKB"/>
</dbReference>
<dbReference type="InterPro" id="IPR019379">
    <property type="entry name" value="Gamma_Secretase_Asp_P_PEN2"/>
</dbReference>
<dbReference type="PANTHER" id="PTHR16318">
    <property type="entry name" value="GAMMA-SECRETASE SUBUNIT PEN-2"/>
    <property type="match status" value="1"/>
</dbReference>
<dbReference type="PANTHER" id="PTHR16318:SF0">
    <property type="entry name" value="GAMMA-SECRETASE SUBUNIT PEN-2"/>
    <property type="match status" value="1"/>
</dbReference>
<dbReference type="Pfam" id="PF10251">
    <property type="entry name" value="PEN-2"/>
    <property type="match status" value="1"/>
</dbReference>
<keyword id="KW-1003">Cell membrane</keyword>
<keyword id="KW-0256">Endoplasmic reticulum</keyword>
<keyword id="KW-0333">Golgi apparatus</keyword>
<keyword id="KW-0472">Membrane</keyword>
<keyword id="KW-0914">Notch signaling pathway</keyword>
<keyword id="KW-1185">Reference proteome</keyword>
<keyword id="KW-0812">Transmembrane</keyword>
<keyword id="KW-1133">Transmembrane helix</keyword>
<sequence length="101" mass="11999">MNLERVSNEEKLNLCRKYYLGGFAFLPFLWLVNIFWFFREAFLAPAYTEQSQIKGYVWRSAVGFLFWVIILATWITIFQIYRPRWGALGDYLSFTIPLGTP</sequence>
<reference key="1">
    <citation type="journal article" date="2005" name="Science">
        <title>The transcriptional landscape of the mammalian genome.</title>
        <authorList>
            <person name="Carninci P."/>
            <person name="Kasukawa T."/>
            <person name="Katayama S."/>
            <person name="Gough J."/>
            <person name="Frith M.C."/>
            <person name="Maeda N."/>
            <person name="Oyama R."/>
            <person name="Ravasi T."/>
            <person name="Lenhard B."/>
            <person name="Wells C."/>
            <person name="Kodzius R."/>
            <person name="Shimokawa K."/>
            <person name="Bajic V.B."/>
            <person name="Brenner S.E."/>
            <person name="Batalov S."/>
            <person name="Forrest A.R."/>
            <person name="Zavolan M."/>
            <person name="Davis M.J."/>
            <person name="Wilming L.G."/>
            <person name="Aidinis V."/>
            <person name="Allen J.E."/>
            <person name="Ambesi-Impiombato A."/>
            <person name="Apweiler R."/>
            <person name="Aturaliya R.N."/>
            <person name="Bailey T.L."/>
            <person name="Bansal M."/>
            <person name="Baxter L."/>
            <person name="Beisel K.W."/>
            <person name="Bersano T."/>
            <person name="Bono H."/>
            <person name="Chalk A.M."/>
            <person name="Chiu K.P."/>
            <person name="Choudhary V."/>
            <person name="Christoffels A."/>
            <person name="Clutterbuck D.R."/>
            <person name="Crowe M.L."/>
            <person name="Dalla E."/>
            <person name="Dalrymple B.P."/>
            <person name="de Bono B."/>
            <person name="Della Gatta G."/>
            <person name="di Bernardo D."/>
            <person name="Down T."/>
            <person name="Engstrom P."/>
            <person name="Fagiolini M."/>
            <person name="Faulkner G."/>
            <person name="Fletcher C.F."/>
            <person name="Fukushima T."/>
            <person name="Furuno M."/>
            <person name="Futaki S."/>
            <person name="Gariboldi M."/>
            <person name="Georgii-Hemming P."/>
            <person name="Gingeras T.R."/>
            <person name="Gojobori T."/>
            <person name="Green R.E."/>
            <person name="Gustincich S."/>
            <person name="Harbers M."/>
            <person name="Hayashi Y."/>
            <person name="Hensch T.K."/>
            <person name="Hirokawa N."/>
            <person name="Hill D."/>
            <person name="Huminiecki L."/>
            <person name="Iacono M."/>
            <person name="Ikeo K."/>
            <person name="Iwama A."/>
            <person name="Ishikawa T."/>
            <person name="Jakt M."/>
            <person name="Kanapin A."/>
            <person name="Katoh M."/>
            <person name="Kawasawa Y."/>
            <person name="Kelso J."/>
            <person name="Kitamura H."/>
            <person name="Kitano H."/>
            <person name="Kollias G."/>
            <person name="Krishnan S.P."/>
            <person name="Kruger A."/>
            <person name="Kummerfeld S.K."/>
            <person name="Kurochkin I.V."/>
            <person name="Lareau L.F."/>
            <person name="Lazarevic D."/>
            <person name="Lipovich L."/>
            <person name="Liu J."/>
            <person name="Liuni S."/>
            <person name="McWilliam S."/>
            <person name="Madan Babu M."/>
            <person name="Madera M."/>
            <person name="Marchionni L."/>
            <person name="Matsuda H."/>
            <person name="Matsuzawa S."/>
            <person name="Miki H."/>
            <person name="Mignone F."/>
            <person name="Miyake S."/>
            <person name="Morris K."/>
            <person name="Mottagui-Tabar S."/>
            <person name="Mulder N."/>
            <person name="Nakano N."/>
            <person name="Nakauchi H."/>
            <person name="Ng P."/>
            <person name="Nilsson R."/>
            <person name="Nishiguchi S."/>
            <person name="Nishikawa S."/>
            <person name="Nori F."/>
            <person name="Ohara O."/>
            <person name="Okazaki Y."/>
            <person name="Orlando V."/>
            <person name="Pang K.C."/>
            <person name="Pavan W.J."/>
            <person name="Pavesi G."/>
            <person name="Pesole G."/>
            <person name="Petrovsky N."/>
            <person name="Piazza S."/>
            <person name="Reed J."/>
            <person name="Reid J.F."/>
            <person name="Ring B.Z."/>
            <person name="Ringwald M."/>
            <person name="Rost B."/>
            <person name="Ruan Y."/>
            <person name="Salzberg S.L."/>
            <person name="Sandelin A."/>
            <person name="Schneider C."/>
            <person name="Schoenbach C."/>
            <person name="Sekiguchi K."/>
            <person name="Semple C.A."/>
            <person name="Seno S."/>
            <person name="Sessa L."/>
            <person name="Sheng Y."/>
            <person name="Shibata Y."/>
            <person name="Shimada H."/>
            <person name="Shimada K."/>
            <person name="Silva D."/>
            <person name="Sinclair B."/>
            <person name="Sperling S."/>
            <person name="Stupka E."/>
            <person name="Sugiura K."/>
            <person name="Sultana R."/>
            <person name="Takenaka Y."/>
            <person name="Taki K."/>
            <person name="Tammoja K."/>
            <person name="Tan S.L."/>
            <person name="Tang S."/>
            <person name="Taylor M.S."/>
            <person name="Tegner J."/>
            <person name="Teichmann S.A."/>
            <person name="Ueda H.R."/>
            <person name="van Nimwegen E."/>
            <person name="Verardo R."/>
            <person name="Wei C.L."/>
            <person name="Yagi K."/>
            <person name="Yamanishi H."/>
            <person name="Zabarovsky E."/>
            <person name="Zhu S."/>
            <person name="Zimmer A."/>
            <person name="Hide W."/>
            <person name="Bult C."/>
            <person name="Grimmond S.M."/>
            <person name="Teasdale R.D."/>
            <person name="Liu E.T."/>
            <person name="Brusic V."/>
            <person name="Quackenbush J."/>
            <person name="Wahlestedt C."/>
            <person name="Mattick J.S."/>
            <person name="Hume D.A."/>
            <person name="Kai C."/>
            <person name="Sasaki D."/>
            <person name="Tomaru Y."/>
            <person name="Fukuda S."/>
            <person name="Kanamori-Katayama M."/>
            <person name="Suzuki M."/>
            <person name="Aoki J."/>
            <person name="Arakawa T."/>
            <person name="Iida J."/>
            <person name="Imamura K."/>
            <person name="Itoh M."/>
            <person name="Kato T."/>
            <person name="Kawaji H."/>
            <person name="Kawagashira N."/>
            <person name="Kawashima T."/>
            <person name="Kojima M."/>
            <person name="Kondo S."/>
            <person name="Konno H."/>
            <person name="Nakano K."/>
            <person name="Ninomiya N."/>
            <person name="Nishio T."/>
            <person name="Okada M."/>
            <person name="Plessy C."/>
            <person name="Shibata K."/>
            <person name="Shiraki T."/>
            <person name="Suzuki S."/>
            <person name="Tagami M."/>
            <person name="Waki K."/>
            <person name="Watahiki A."/>
            <person name="Okamura-Oho Y."/>
            <person name="Suzuki H."/>
            <person name="Kawai J."/>
            <person name="Hayashizaki Y."/>
        </authorList>
    </citation>
    <scope>NUCLEOTIDE SEQUENCE [LARGE SCALE MRNA]</scope>
    <source>
        <strain>C57BL/6J</strain>
        <tissue>Kidney</tissue>
        <tissue>Pancreas</tissue>
        <tissue>Testis</tissue>
    </source>
</reference>
<reference key="2">
    <citation type="journal article" date="2004" name="Genome Res.">
        <title>The status, quality, and expansion of the NIH full-length cDNA project: the Mammalian Gene Collection (MGC).</title>
        <authorList>
            <consortium name="The MGC Project Team"/>
        </authorList>
    </citation>
    <scope>NUCLEOTIDE SEQUENCE [LARGE SCALE MRNA]</scope>
    <source>
        <strain>C57BL/6J</strain>
        <tissue>Brain</tissue>
        <tissue>Colon</tissue>
    </source>
</reference>
<reference key="3">
    <citation type="journal article" date="2003" name="J. Biol. Chem.">
        <title>PEN-2 and APH-1 coordinately regulate proteolytic processing of presenilin 1.</title>
        <authorList>
            <person name="Luo W.-J."/>
            <person name="Wang H."/>
            <person name="Li H."/>
            <person name="Kim B.S."/>
            <person name="Shah S."/>
            <person name="Lee H.-J."/>
            <person name="Thinakaran G."/>
            <person name="Kim T.-W."/>
            <person name="Yu G."/>
            <person name="Xu H."/>
        </authorList>
    </citation>
    <scope>SUBCELLULAR LOCATION</scope>
    <scope>FUNCTION</scope>
    <scope>SUBUNIT</scope>
</reference>
<reference key="4">
    <citation type="journal article" date="2010" name="Cell">
        <title>A tissue-specific atlas of mouse protein phosphorylation and expression.</title>
        <authorList>
            <person name="Huttlin E.L."/>
            <person name="Jedrychowski M.P."/>
            <person name="Elias J.E."/>
            <person name="Goswami T."/>
            <person name="Rad R."/>
            <person name="Beausoleil S.A."/>
            <person name="Villen J."/>
            <person name="Haas W."/>
            <person name="Sowa M.E."/>
            <person name="Gygi S.P."/>
        </authorList>
    </citation>
    <scope>IDENTIFICATION BY MASS SPECTROMETRY [LARGE SCALE ANALYSIS]</scope>
    <source>
        <tissue>Brain</tissue>
        <tissue>Kidney</tissue>
        <tissue>Lung</tissue>
    </source>
</reference>
<reference key="5">
    <citation type="journal article" date="2014" name="Biochemistry">
        <title>Pen-2 is essential for gamma-secretase complex stability and trafficking but partially dispensable for endoproteolysis.</title>
        <authorList>
            <person name="Holmes O."/>
            <person name="Paturi S."/>
            <person name="Selkoe D.J."/>
            <person name="Wolfe M.S."/>
        </authorList>
    </citation>
    <scope>FUNCTION</scope>
    <scope>SUBUNIT</scope>
</reference>